<reference key="1">
    <citation type="submission" date="2008-01" db="EMBL/GenBank/DDBJ databases">
        <title>Complete sequence of Pseudomonas putida GB-1.</title>
        <authorList>
            <consortium name="US DOE Joint Genome Institute"/>
            <person name="Copeland A."/>
            <person name="Lucas S."/>
            <person name="Lapidus A."/>
            <person name="Barry K."/>
            <person name="Glavina del Rio T."/>
            <person name="Dalin E."/>
            <person name="Tice H."/>
            <person name="Pitluck S."/>
            <person name="Bruce D."/>
            <person name="Goodwin L."/>
            <person name="Chertkov O."/>
            <person name="Brettin T."/>
            <person name="Detter J.C."/>
            <person name="Han C."/>
            <person name="Kuske C.R."/>
            <person name="Schmutz J."/>
            <person name="Larimer F."/>
            <person name="Land M."/>
            <person name="Hauser L."/>
            <person name="Kyrpides N."/>
            <person name="Kim E."/>
            <person name="McCarthy J.K."/>
            <person name="Richardson P."/>
        </authorList>
    </citation>
    <scope>NUCLEOTIDE SEQUENCE [LARGE SCALE GENOMIC DNA]</scope>
    <source>
        <strain>GB-1</strain>
    </source>
</reference>
<name>THIG_PSEPG</name>
<comment type="function">
    <text evidence="1">Catalyzes the rearrangement of 1-deoxy-D-xylulose 5-phosphate (DXP) to produce the thiazole phosphate moiety of thiamine. Sulfur is provided by the thiocarboxylate moiety of the carrier protein ThiS. In vitro, sulfur can be provided by H(2)S.</text>
</comment>
<comment type="catalytic activity">
    <reaction evidence="1">
        <text>[ThiS sulfur-carrier protein]-C-terminal-Gly-aminoethanethioate + 2-iminoacetate + 1-deoxy-D-xylulose 5-phosphate = [ThiS sulfur-carrier protein]-C-terminal Gly-Gly + 2-[(2R,5Z)-2-carboxy-4-methylthiazol-5(2H)-ylidene]ethyl phosphate + 2 H2O + H(+)</text>
        <dbReference type="Rhea" id="RHEA:26297"/>
        <dbReference type="Rhea" id="RHEA-COMP:12909"/>
        <dbReference type="Rhea" id="RHEA-COMP:19908"/>
        <dbReference type="ChEBI" id="CHEBI:15377"/>
        <dbReference type="ChEBI" id="CHEBI:15378"/>
        <dbReference type="ChEBI" id="CHEBI:57792"/>
        <dbReference type="ChEBI" id="CHEBI:62899"/>
        <dbReference type="ChEBI" id="CHEBI:77846"/>
        <dbReference type="ChEBI" id="CHEBI:90778"/>
        <dbReference type="ChEBI" id="CHEBI:232372"/>
        <dbReference type="EC" id="2.8.1.10"/>
    </reaction>
</comment>
<comment type="pathway">
    <text evidence="1">Cofactor biosynthesis; thiamine diphosphate biosynthesis.</text>
</comment>
<comment type="subunit">
    <text evidence="1">Homotetramer. Forms heterodimers with either ThiH or ThiS.</text>
</comment>
<comment type="subcellular location">
    <subcellularLocation>
        <location evidence="1">Cytoplasm</location>
    </subcellularLocation>
</comment>
<comment type="similarity">
    <text evidence="1">Belongs to the ThiG family.</text>
</comment>
<dbReference type="EC" id="2.8.1.10" evidence="1"/>
<dbReference type="EMBL" id="CP000926">
    <property type="protein sequence ID" value="ABZ01039.1"/>
    <property type="molecule type" value="Genomic_DNA"/>
</dbReference>
<dbReference type="RefSeq" id="WP_003249091.1">
    <property type="nucleotide sequence ID" value="NC_010322.1"/>
</dbReference>
<dbReference type="SMR" id="B0KN58"/>
<dbReference type="KEGG" id="ppg:PputGB1_5154"/>
<dbReference type="eggNOG" id="COG2022">
    <property type="taxonomic scope" value="Bacteria"/>
</dbReference>
<dbReference type="HOGENOM" id="CLU_062233_1_1_6"/>
<dbReference type="UniPathway" id="UPA00060"/>
<dbReference type="Proteomes" id="UP000002157">
    <property type="component" value="Chromosome"/>
</dbReference>
<dbReference type="GO" id="GO:0005737">
    <property type="term" value="C:cytoplasm"/>
    <property type="evidence" value="ECO:0007669"/>
    <property type="project" value="UniProtKB-SubCell"/>
</dbReference>
<dbReference type="GO" id="GO:1990107">
    <property type="term" value="F:thiazole synthase activity"/>
    <property type="evidence" value="ECO:0007669"/>
    <property type="project" value="UniProtKB-EC"/>
</dbReference>
<dbReference type="GO" id="GO:0009229">
    <property type="term" value="P:thiamine diphosphate biosynthetic process"/>
    <property type="evidence" value="ECO:0007669"/>
    <property type="project" value="UniProtKB-UniRule"/>
</dbReference>
<dbReference type="CDD" id="cd04728">
    <property type="entry name" value="ThiG"/>
    <property type="match status" value="1"/>
</dbReference>
<dbReference type="Gene3D" id="3.20.20.70">
    <property type="entry name" value="Aldolase class I"/>
    <property type="match status" value="1"/>
</dbReference>
<dbReference type="HAMAP" id="MF_00443">
    <property type="entry name" value="ThiG"/>
    <property type="match status" value="1"/>
</dbReference>
<dbReference type="InterPro" id="IPR013785">
    <property type="entry name" value="Aldolase_TIM"/>
</dbReference>
<dbReference type="InterPro" id="IPR033983">
    <property type="entry name" value="Thiazole_synthase_ThiG"/>
</dbReference>
<dbReference type="InterPro" id="IPR008867">
    <property type="entry name" value="ThiG"/>
</dbReference>
<dbReference type="PANTHER" id="PTHR34266">
    <property type="entry name" value="THIAZOLE SYNTHASE"/>
    <property type="match status" value="1"/>
</dbReference>
<dbReference type="PANTHER" id="PTHR34266:SF2">
    <property type="entry name" value="THIAZOLE SYNTHASE"/>
    <property type="match status" value="1"/>
</dbReference>
<dbReference type="Pfam" id="PF05690">
    <property type="entry name" value="ThiG"/>
    <property type="match status" value="1"/>
</dbReference>
<dbReference type="SUPFAM" id="SSF110399">
    <property type="entry name" value="ThiG-like"/>
    <property type="match status" value="1"/>
</dbReference>
<evidence type="ECO:0000255" key="1">
    <source>
        <dbReference type="HAMAP-Rule" id="MF_00443"/>
    </source>
</evidence>
<gene>
    <name evidence="1" type="primary">thiG</name>
    <name type="ordered locus">PputGB1_5154</name>
</gene>
<feature type="chain" id="PRO_1000080874" description="Thiazole synthase">
    <location>
        <begin position="1"/>
        <end position="270"/>
    </location>
</feature>
<feature type="active site" description="Schiff-base intermediate with DXP" evidence="1">
    <location>
        <position position="112"/>
    </location>
</feature>
<feature type="binding site" evidence="1">
    <location>
        <position position="173"/>
    </location>
    <ligand>
        <name>1-deoxy-D-xylulose 5-phosphate</name>
        <dbReference type="ChEBI" id="CHEBI:57792"/>
    </ligand>
</feature>
<feature type="binding site" evidence="1">
    <location>
        <begin position="199"/>
        <end position="200"/>
    </location>
    <ligand>
        <name>1-deoxy-D-xylulose 5-phosphate</name>
        <dbReference type="ChEBI" id="CHEBI:57792"/>
    </ligand>
</feature>
<feature type="binding site" evidence="1">
    <location>
        <begin position="221"/>
        <end position="222"/>
    </location>
    <ligand>
        <name>1-deoxy-D-xylulose 5-phosphate</name>
        <dbReference type="ChEBI" id="CHEBI:57792"/>
    </ligand>
</feature>
<protein>
    <recommendedName>
        <fullName evidence="1">Thiazole synthase</fullName>
        <ecNumber evidence="1">2.8.1.10</ecNumber>
    </recommendedName>
</protein>
<keyword id="KW-0963">Cytoplasm</keyword>
<keyword id="KW-0704">Schiff base</keyword>
<keyword id="KW-0784">Thiamine biosynthesis</keyword>
<keyword id="KW-0808">Transferase</keyword>
<proteinExistence type="inferred from homology"/>
<organism>
    <name type="scientific">Pseudomonas putida (strain GB-1)</name>
    <dbReference type="NCBI Taxonomy" id="76869"/>
    <lineage>
        <taxon>Bacteria</taxon>
        <taxon>Pseudomonadati</taxon>
        <taxon>Pseudomonadota</taxon>
        <taxon>Gammaproteobacteria</taxon>
        <taxon>Pseudomonadales</taxon>
        <taxon>Pseudomonadaceae</taxon>
        <taxon>Pseudomonas</taxon>
    </lineage>
</organism>
<sequence>MSNVRSDKPFTLAGRTFQSRLLVGTGKYRDMEETRLATEASGAEIVTVAVRRTNLGQNAGEPNLLDVLSPDKYTILPNTAGCFDAVEAVRTCRLARELLDGRKSHESRTLVKLEVLADQKTLFPNVIETLKAAEVLVKEGFDVMVYTSDDPIIARQLAEVGCIAVMPLAGLIGTGLGICNPYNLQIILEESKVPVLVDAGVGTASDATIAMEMGCEAVLMNSAIAHAQQPVLMAEAMKHAIVAGRMAYLAGRMPKKLYASASSPLDGLIK</sequence>
<accession>B0KN58</accession>